<gene>
    <name evidence="1" type="primary">atpD</name>
    <name type="ordered locus">SAOUHSC_02341</name>
</gene>
<organism>
    <name type="scientific">Staphylococcus aureus (strain NCTC 8325 / PS 47)</name>
    <dbReference type="NCBI Taxonomy" id="93061"/>
    <lineage>
        <taxon>Bacteria</taxon>
        <taxon>Bacillati</taxon>
        <taxon>Bacillota</taxon>
        <taxon>Bacilli</taxon>
        <taxon>Bacillales</taxon>
        <taxon>Staphylococcaceae</taxon>
        <taxon>Staphylococcus</taxon>
    </lineage>
</organism>
<name>ATPB_STAA8</name>
<dbReference type="EC" id="7.1.2.2" evidence="1"/>
<dbReference type="EMBL" id="CP000253">
    <property type="protein sequence ID" value="ABD31375.1"/>
    <property type="molecule type" value="Genomic_DNA"/>
</dbReference>
<dbReference type="RefSeq" id="WP_000511135.1">
    <property type="nucleotide sequence ID" value="NZ_LS483365.1"/>
</dbReference>
<dbReference type="RefSeq" id="YP_500820.1">
    <property type="nucleotide sequence ID" value="NC_007795.1"/>
</dbReference>
<dbReference type="SMR" id="Q2FWF0"/>
<dbReference type="STRING" id="93061.SAOUHSC_02341"/>
<dbReference type="PaxDb" id="1280-SAXN108_2348"/>
<dbReference type="GeneID" id="3920966"/>
<dbReference type="GeneID" id="98346410"/>
<dbReference type="KEGG" id="sao:SAOUHSC_02341"/>
<dbReference type="PATRIC" id="fig|93061.5.peg.2121"/>
<dbReference type="eggNOG" id="COG0055">
    <property type="taxonomic scope" value="Bacteria"/>
</dbReference>
<dbReference type="HOGENOM" id="CLU_022398_0_2_9"/>
<dbReference type="OrthoDB" id="9801639at2"/>
<dbReference type="PRO" id="PR:Q2FWF0"/>
<dbReference type="Proteomes" id="UP000008816">
    <property type="component" value="Chromosome"/>
</dbReference>
<dbReference type="GO" id="GO:0005886">
    <property type="term" value="C:plasma membrane"/>
    <property type="evidence" value="ECO:0007669"/>
    <property type="project" value="UniProtKB-SubCell"/>
</dbReference>
<dbReference type="GO" id="GO:0045259">
    <property type="term" value="C:proton-transporting ATP synthase complex"/>
    <property type="evidence" value="ECO:0007669"/>
    <property type="project" value="UniProtKB-KW"/>
</dbReference>
<dbReference type="GO" id="GO:0005524">
    <property type="term" value="F:ATP binding"/>
    <property type="evidence" value="ECO:0007669"/>
    <property type="project" value="UniProtKB-UniRule"/>
</dbReference>
<dbReference type="GO" id="GO:0016887">
    <property type="term" value="F:ATP hydrolysis activity"/>
    <property type="evidence" value="ECO:0007669"/>
    <property type="project" value="InterPro"/>
</dbReference>
<dbReference type="GO" id="GO:0046933">
    <property type="term" value="F:proton-transporting ATP synthase activity, rotational mechanism"/>
    <property type="evidence" value="ECO:0007669"/>
    <property type="project" value="UniProtKB-UniRule"/>
</dbReference>
<dbReference type="CDD" id="cd18110">
    <property type="entry name" value="ATP-synt_F1_beta_C"/>
    <property type="match status" value="1"/>
</dbReference>
<dbReference type="CDD" id="cd18115">
    <property type="entry name" value="ATP-synt_F1_beta_N"/>
    <property type="match status" value="1"/>
</dbReference>
<dbReference type="CDD" id="cd01133">
    <property type="entry name" value="F1-ATPase_beta_CD"/>
    <property type="match status" value="1"/>
</dbReference>
<dbReference type="FunFam" id="1.10.1140.10:FF:000001">
    <property type="entry name" value="ATP synthase subunit beta"/>
    <property type="match status" value="1"/>
</dbReference>
<dbReference type="FunFam" id="2.40.10.170:FF:000005">
    <property type="entry name" value="ATP synthase subunit beta"/>
    <property type="match status" value="1"/>
</dbReference>
<dbReference type="FunFam" id="3.40.50.300:FF:000004">
    <property type="entry name" value="ATP synthase subunit beta"/>
    <property type="match status" value="1"/>
</dbReference>
<dbReference type="Gene3D" id="2.40.10.170">
    <property type="match status" value="1"/>
</dbReference>
<dbReference type="Gene3D" id="1.10.1140.10">
    <property type="entry name" value="Bovine Mitochondrial F1-atpase, Atp Synthase Beta Chain, Chain D, domain 3"/>
    <property type="match status" value="1"/>
</dbReference>
<dbReference type="Gene3D" id="3.40.50.300">
    <property type="entry name" value="P-loop containing nucleotide triphosphate hydrolases"/>
    <property type="match status" value="1"/>
</dbReference>
<dbReference type="HAMAP" id="MF_01347">
    <property type="entry name" value="ATP_synth_beta_bact"/>
    <property type="match status" value="1"/>
</dbReference>
<dbReference type="InterPro" id="IPR003593">
    <property type="entry name" value="AAA+_ATPase"/>
</dbReference>
<dbReference type="InterPro" id="IPR055190">
    <property type="entry name" value="ATP-synt_VA_C"/>
</dbReference>
<dbReference type="InterPro" id="IPR005722">
    <property type="entry name" value="ATP_synth_F1_bsu"/>
</dbReference>
<dbReference type="InterPro" id="IPR020003">
    <property type="entry name" value="ATPase_a/bsu_AS"/>
</dbReference>
<dbReference type="InterPro" id="IPR050053">
    <property type="entry name" value="ATPase_alpha/beta_chains"/>
</dbReference>
<dbReference type="InterPro" id="IPR004100">
    <property type="entry name" value="ATPase_F1/V1/A1_a/bsu_N"/>
</dbReference>
<dbReference type="InterPro" id="IPR036121">
    <property type="entry name" value="ATPase_F1/V1/A1_a/bsu_N_sf"/>
</dbReference>
<dbReference type="InterPro" id="IPR000194">
    <property type="entry name" value="ATPase_F1/V1/A1_a/bsu_nucl-bd"/>
</dbReference>
<dbReference type="InterPro" id="IPR024034">
    <property type="entry name" value="ATPase_F1/V1_b/a_C"/>
</dbReference>
<dbReference type="InterPro" id="IPR027417">
    <property type="entry name" value="P-loop_NTPase"/>
</dbReference>
<dbReference type="NCBIfam" id="TIGR01039">
    <property type="entry name" value="atpD"/>
    <property type="match status" value="1"/>
</dbReference>
<dbReference type="PANTHER" id="PTHR15184">
    <property type="entry name" value="ATP SYNTHASE"/>
    <property type="match status" value="1"/>
</dbReference>
<dbReference type="PANTHER" id="PTHR15184:SF71">
    <property type="entry name" value="ATP SYNTHASE SUBUNIT BETA, MITOCHONDRIAL"/>
    <property type="match status" value="1"/>
</dbReference>
<dbReference type="Pfam" id="PF00006">
    <property type="entry name" value="ATP-synt_ab"/>
    <property type="match status" value="1"/>
</dbReference>
<dbReference type="Pfam" id="PF02874">
    <property type="entry name" value="ATP-synt_ab_N"/>
    <property type="match status" value="1"/>
</dbReference>
<dbReference type="Pfam" id="PF22919">
    <property type="entry name" value="ATP-synt_VA_C"/>
    <property type="match status" value="1"/>
</dbReference>
<dbReference type="SMART" id="SM00382">
    <property type="entry name" value="AAA"/>
    <property type="match status" value="1"/>
</dbReference>
<dbReference type="SUPFAM" id="SSF47917">
    <property type="entry name" value="C-terminal domain of alpha and beta subunits of F1 ATP synthase"/>
    <property type="match status" value="1"/>
</dbReference>
<dbReference type="SUPFAM" id="SSF50615">
    <property type="entry name" value="N-terminal domain of alpha and beta subunits of F1 ATP synthase"/>
    <property type="match status" value="1"/>
</dbReference>
<dbReference type="SUPFAM" id="SSF52540">
    <property type="entry name" value="P-loop containing nucleoside triphosphate hydrolases"/>
    <property type="match status" value="1"/>
</dbReference>
<dbReference type="PROSITE" id="PS00152">
    <property type="entry name" value="ATPASE_ALPHA_BETA"/>
    <property type="match status" value="1"/>
</dbReference>
<accession>Q2FWF0</accession>
<reference key="1">
    <citation type="book" date="2006" name="Gram positive pathogens, 2nd edition">
        <title>The Staphylococcus aureus NCTC 8325 genome.</title>
        <editorList>
            <person name="Fischetti V."/>
            <person name="Novick R."/>
            <person name="Ferretti J."/>
            <person name="Portnoy D."/>
            <person name="Rood J."/>
        </editorList>
        <authorList>
            <person name="Gillaspy A.F."/>
            <person name="Worrell V."/>
            <person name="Orvis J."/>
            <person name="Roe B.A."/>
            <person name="Dyer D.W."/>
            <person name="Iandolo J.J."/>
        </authorList>
    </citation>
    <scope>NUCLEOTIDE SEQUENCE [LARGE SCALE GENOMIC DNA]</scope>
    <source>
        <strain>NCTC 8325 / PS 47</strain>
    </source>
</reference>
<feature type="chain" id="PRO_0000254382" description="ATP synthase subunit beta">
    <location>
        <begin position="1"/>
        <end position="470"/>
    </location>
</feature>
<feature type="binding site" evidence="1">
    <location>
        <begin position="155"/>
        <end position="162"/>
    </location>
    <ligand>
        <name>ATP</name>
        <dbReference type="ChEBI" id="CHEBI:30616"/>
    </ligand>
</feature>
<keyword id="KW-0066">ATP synthesis</keyword>
<keyword id="KW-0067">ATP-binding</keyword>
<keyword id="KW-1003">Cell membrane</keyword>
<keyword id="KW-0139">CF(1)</keyword>
<keyword id="KW-0375">Hydrogen ion transport</keyword>
<keyword id="KW-0406">Ion transport</keyword>
<keyword id="KW-0472">Membrane</keyword>
<keyword id="KW-0547">Nucleotide-binding</keyword>
<keyword id="KW-1185">Reference proteome</keyword>
<keyword id="KW-1278">Translocase</keyword>
<keyword id="KW-0813">Transport</keyword>
<sequence length="470" mass="51400">MGIGRVTQVMGPVIDVRFEHNEVPKINNALVIDVPKEEGTIQLTLEVALQLGDDVVRTIAMDSTDGVQRGMDVKDTGKEISVPVGDETLGRVFNVLGETIDLKEEISDSVRRDPIHRQAPAFDELSTEVQILETGIKVVDLLAPYIKGGKIGLFGGAGVGKTVLIQELINNIAQEHGGISVFAGVGERTREGNDLYFEMSDSGVIKKTAMVFGQMNEPPGARMRVALSGLTMAEYFRDEQGQDVLLFIDNIFRFTQAGSEVSALLGRMPSAVGYQPTLATEMGQLQERITSTTKGSVTSIQAVFVPADDYTDPAPATAFAHLDATTNLERKLTEMGIYPAVDPLASTSRALEPSIVGQEHYEVARDVQSTLQKYRELQDIIAILGMDELSDEDKQTVERARRIQFFLSQNFHVAEQFTGQKGSYVPVKTTVANFKDILDGKYDHIPEDAFRLVGSMDDVIAKAKDMGVEV</sequence>
<evidence type="ECO:0000255" key="1">
    <source>
        <dbReference type="HAMAP-Rule" id="MF_01347"/>
    </source>
</evidence>
<comment type="function">
    <text evidence="1">Produces ATP from ADP in the presence of a proton gradient across the membrane. The catalytic sites are hosted primarily by the beta subunits.</text>
</comment>
<comment type="catalytic activity">
    <reaction evidence="1">
        <text>ATP + H2O + 4 H(+)(in) = ADP + phosphate + 5 H(+)(out)</text>
        <dbReference type="Rhea" id="RHEA:57720"/>
        <dbReference type="ChEBI" id="CHEBI:15377"/>
        <dbReference type="ChEBI" id="CHEBI:15378"/>
        <dbReference type="ChEBI" id="CHEBI:30616"/>
        <dbReference type="ChEBI" id="CHEBI:43474"/>
        <dbReference type="ChEBI" id="CHEBI:456216"/>
        <dbReference type="EC" id="7.1.2.2"/>
    </reaction>
</comment>
<comment type="subunit">
    <text evidence="1">F-type ATPases have 2 components, CF(1) - the catalytic core - and CF(0) - the membrane proton channel. CF(1) has five subunits: alpha(3), beta(3), gamma(1), delta(1), epsilon(1). CF(0) has three main subunits: a(1), b(2) and c(9-12). The alpha and beta chains form an alternating ring which encloses part of the gamma chain. CF(1) is attached to CF(0) by a central stalk formed by the gamma and epsilon chains, while a peripheral stalk is formed by the delta and b chains.</text>
</comment>
<comment type="subcellular location">
    <subcellularLocation>
        <location evidence="1">Cell membrane</location>
        <topology evidence="1">Peripheral membrane protein</topology>
    </subcellularLocation>
</comment>
<comment type="similarity">
    <text evidence="1">Belongs to the ATPase alpha/beta chains family.</text>
</comment>
<protein>
    <recommendedName>
        <fullName evidence="1">ATP synthase subunit beta</fullName>
        <ecNumber evidence="1">7.1.2.2</ecNumber>
    </recommendedName>
    <alternativeName>
        <fullName evidence="1">ATP synthase F1 sector subunit beta</fullName>
    </alternativeName>
    <alternativeName>
        <fullName evidence="1">F-ATPase subunit beta</fullName>
    </alternativeName>
</protein>
<proteinExistence type="inferred from homology"/>